<name>PYRH_STUS1</name>
<proteinExistence type="inferred from homology"/>
<keyword id="KW-0067">ATP-binding</keyword>
<keyword id="KW-0963">Cytoplasm</keyword>
<keyword id="KW-0418">Kinase</keyword>
<keyword id="KW-0547">Nucleotide-binding</keyword>
<keyword id="KW-0665">Pyrimidine biosynthesis</keyword>
<keyword id="KW-1185">Reference proteome</keyword>
<keyword id="KW-0808">Transferase</keyword>
<evidence type="ECO:0000255" key="1">
    <source>
        <dbReference type="HAMAP-Rule" id="MF_01220"/>
    </source>
</evidence>
<reference key="1">
    <citation type="journal article" date="2008" name="Proc. Natl. Acad. Sci. U.S.A.">
        <title>Nitrogen fixation island and rhizosphere competence traits in the genome of root-associated Pseudomonas stutzeri A1501.</title>
        <authorList>
            <person name="Yan Y."/>
            <person name="Yang J."/>
            <person name="Dou Y."/>
            <person name="Chen M."/>
            <person name="Ping S."/>
            <person name="Peng J."/>
            <person name="Lu W."/>
            <person name="Zhang W."/>
            <person name="Yao Z."/>
            <person name="Li H."/>
            <person name="Liu W."/>
            <person name="He S."/>
            <person name="Geng L."/>
            <person name="Zhang X."/>
            <person name="Yang F."/>
            <person name="Yu H."/>
            <person name="Zhan Y."/>
            <person name="Li D."/>
            <person name="Lin Z."/>
            <person name="Wang Y."/>
            <person name="Elmerich C."/>
            <person name="Lin M."/>
            <person name="Jin Q."/>
        </authorList>
    </citation>
    <scope>NUCLEOTIDE SEQUENCE [LARGE SCALE GENOMIC DNA]</scope>
    <source>
        <strain>A1501</strain>
    </source>
</reference>
<sequence>MAQQMSARNPRYKRILLKLSGEALMGSEDFGIDPKVLDRMALEVGQLVGIGVEVGLVIGGGNLFRGAALSAAGMDRVTGDHMGMLATVMNALAMRDALERSNIPALVMSAISMVGVTDHYDRRKAMRHLKSGEVVIFSAGTGNPFFTTDSAACLRAIEIQADVVLKATKVDGVYTADPFKDPNAEKFAELTYDEVLDRKLGVMDLTAICLCRDHSMPLRVFNMNKPGALLNIVLGGAEGTLIEESNE</sequence>
<gene>
    <name evidence="1" type="primary">pyrH</name>
    <name type="ordered locus">PST_1539</name>
</gene>
<protein>
    <recommendedName>
        <fullName evidence="1">Uridylate kinase</fullName>
        <shortName evidence="1">UK</shortName>
        <ecNumber evidence="1">2.7.4.22</ecNumber>
    </recommendedName>
    <alternativeName>
        <fullName evidence="1">Uridine monophosphate kinase</fullName>
        <shortName evidence="1">UMP kinase</shortName>
        <shortName evidence="1">UMPK</shortName>
    </alternativeName>
</protein>
<organism>
    <name type="scientific">Stutzerimonas stutzeri (strain A1501)</name>
    <name type="common">Pseudomonas stutzeri</name>
    <dbReference type="NCBI Taxonomy" id="379731"/>
    <lineage>
        <taxon>Bacteria</taxon>
        <taxon>Pseudomonadati</taxon>
        <taxon>Pseudomonadota</taxon>
        <taxon>Gammaproteobacteria</taxon>
        <taxon>Pseudomonadales</taxon>
        <taxon>Pseudomonadaceae</taxon>
        <taxon>Stutzerimonas</taxon>
    </lineage>
</organism>
<dbReference type="EC" id="2.7.4.22" evidence="1"/>
<dbReference type="EMBL" id="CP000304">
    <property type="protein sequence ID" value="ABP79224.1"/>
    <property type="molecule type" value="Genomic_DNA"/>
</dbReference>
<dbReference type="RefSeq" id="WP_011912702.1">
    <property type="nucleotide sequence ID" value="NC_009434.1"/>
</dbReference>
<dbReference type="SMR" id="A4VJS3"/>
<dbReference type="GeneID" id="66820685"/>
<dbReference type="KEGG" id="psa:PST_1539"/>
<dbReference type="eggNOG" id="COG0528">
    <property type="taxonomic scope" value="Bacteria"/>
</dbReference>
<dbReference type="HOGENOM" id="CLU_033861_0_0_6"/>
<dbReference type="UniPathway" id="UPA00159">
    <property type="reaction ID" value="UER00275"/>
</dbReference>
<dbReference type="Proteomes" id="UP000000233">
    <property type="component" value="Chromosome"/>
</dbReference>
<dbReference type="GO" id="GO:0005829">
    <property type="term" value="C:cytosol"/>
    <property type="evidence" value="ECO:0007669"/>
    <property type="project" value="TreeGrafter"/>
</dbReference>
<dbReference type="GO" id="GO:0005524">
    <property type="term" value="F:ATP binding"/>
    <property type="evidence" value="ECO:0007669"/>
    <property type="project" value="UniProtKB-KW"/>
</dbReference>
<dbReference type="GO" id="GO:0033862">
    <property type="term" value="F:UMP kinase activity"/>
    <property type="evidence" value="ECO:0007669"/>
    <property type="project" value="UniProtKB-EC"/>
</dbReference>
<dbReference type="GO" id="GO:0044210">
    <property type="term" value="P:'de novo' CTP biosynthetic process"/>
    <property type="evidence" value="ECO:0007669"/>
    <property type="project" value="UniProtKB-UniRule"/>
</dbReference>
<dbReference type="GO" id="GO:0006225">
    <property type="term" value="P:UDP biosynthetic process"/>
    <property type="evidence" value="ECO:0007669"/>
    <property type="project" value="TreeGrafter"/>
</dbReference>
<dbReference type="CDD" id="cd04254">
    <property type="entry name" value="AAK_UMPK-PyrH-Ec"/>
    <property type="match status" value="1"/>
</dbReference>
<dbReference type="FunFam" id="3.40.1160.10:FF:000001">
    <property type="entry name" value="Uridylate kinase"/>
    <property type="match status" value="1"/>
</dbReference>
<dbReference type="Gene3D" id="3.40.1160.10">
    <property type="entry name" value="Acetylglutamate kinase-like"/>
    <property type="match status" value="1"/>
</dbReference>
<dbReference type="HAMAP" id="MF_01220_B">
    <property type="entry name" value="PyrH_B"/>
    <property type="match status" value="1"/>
</dbReference>
<dbReference type="InterPro" id="IPR036393">
    <property type="entry name" value="AceGlu_kinase-like_sf"/>
</dbReference>
<dbReference type="InterPro" id="IPR001048">
    <property type="entry name" value="Asp/Glu/Uridylate_kinase"/>
</dbReference>
<dbReference type="InterPro" id="IPR011817">
    <property type="entry name" value="Uridylate_kinase"/>
</dbReference>
<dbReference type="InterPro" id="IPR015963">
    <property type="entry name" value="Uridylate_kinase_bac"/>
</dbReference>
<dbReference type="NCBIfam" id="TIGR02075">
    <property type="entry name" value="pyrH_bact"/>
    <property type="match status" value="1"/>
</dbReference>
<dbReference type="PANTHER" id="PTHR42833">
    <property type="entry name" value="URIDYLATE KINASE"/>
    <property type="match status" value="1"/>
</dbReference>
<dbReference type="PANTHER" id="PTHR42833:SF4">
    <property type="entry name" value="URIDYLATE KINASE PUMPKIN, CHLOROPLASTIC"/>
    <property type="match status" value="1"/>
</dbReference>
<dbReference type="Pfam" id="PF00696">
    <property type="entry name" value="AA_kinase"/>
    <property type="match status" value="1"/>
</dbReference>
<dbReference type="PIRSF" id="PIRSF005650">
    <property type="entry name" value="Uridylate_kin"/>
    <property type="match status" value="1"/>
</dbReference>
<dbReference type="SUPFAM" id="SSF53633">
    <property type="entry name" value="Carbamate kinase-like"/>
    <property type="match status" value="1"/>
</dbReference>
<comment type="function">
    <text evidence="1">Catalyzes the reversible phosphorylation of UMP to UDP.</text>
</comment>
<comment type="catalytic activity">
    <reaction evidence="1">
        <text>UMP + ATP = UDP + ADP</text>
        <dbReference type="Rhea" id="RHEA:24400"/>
        <dbReference type="ChEBI" id="CHEBI:30616"/>
        <dbReference type="ChEBI" id="CHEBI:57865"/>
        <dbReference type="ChEBI" id="CHEBI:58223"/>
        <dbReference type="ChEBI" id="CHEBI:456216"/>
        <dbReference type="EC" id="2.7.4.22"/>
    </reaction>
</comment>
<comment type="activity regulation">
    <text evidence="1">Inhibited by UTP.</text>
</comment>
<comment type="pathway">
    <text evidence="1">Pyrimidine metabolism; CTP biosynthesis via de novo pathway; UDP from UMP (UMPK route): step 1/1.</text>
</comment>
<comment type="subunit">
    <text evidence="1">Homohexamer.</text>
</comment>
<comment type="subcellular location">
    <subcellularLocation>
        <location evidence="1">Cytoplasm</location>
    </subcellularLocation>
</comment>
<comment type="similarity">
    <text evidence="1">Belongs to the UMP kinase family.</text>
</comment>
<accession>A4VJS3</accession>
<feature type="chain" id="PRO_1000053989" description="Uridylate kinase">
    <location>
        <begin position="1"/>
        <end position="247"/>
    </location>
</feature>
<feature type="binding site" evidence="1">
    <location>
        <begin position="18"/>
        <end position="21"/>
    </location>
    <ligand>
        <name>ATP</name>
        <dbReference type="ChEBI" id="CHEBI:30616"/>
    </ligand>
</feature>
<feature type="binding site" evidence="1">
    <location>
        <position position="60"/>
    </location>
    <ligand>
        <name>UMP</name>
        <dbReference type="ChEBI" id="CHEBI:57865"/>
    </ligand>
</feature>
<feature type="binding site" evidence="1">
    <location>
        <position position="61"/>
    </location>
    <ligand>
        <name>ATP</name>
        <dbReference type="ChEBI" id="CHEBI:30616"/>
    </ligand>
</feature>
<feature type="binding site" evidence="1">
    <location>
        <position position="65"/>
    </location>
    <ligand>
        <name>ATP</name>
        <dbReference type="ChEBI" id="CHEBI:30616"/>
    </ligand>
</feature>
<feature type="binding site" evidence="1">
    <location>
        <position position="80"/>
    </location>
    <ligand>
        <name>UMP</name>
        <dbReference type="ChEBI" id="CHEBI:57865"/>
    </ligand>
</feature>
<feature type="binding site" evidence="1">
    <location>
        <begin position="141"/>
        <end position="148"/>
    </location>
    <ligand>
        <name>UMP</name>
        <dbReference type="ChEBI" id="CHEBI:57865"/>
    </ligand>
</feature>
<feature type="binding site" evidence="1">
    <location>
        <position position="168"/>
    </location>
    <ligand>
        <name>ATP</name>
        <dbReference type="ChEBI" id="CHEBI:30616"/>
    </ligand>
</feature>
<feature type="binding site" evidence="1">
    <location>
        <position position="174"/>
    </location>
    <ligand>
        <name>ATP</name>
        <dbReference type="ChEBI" id="CHEBI:30616"/>
    </ligand>
</feature>
<feature type="binding site" evidence="1">
    <location>
        <position position="177"/>
    </location>
    <ligand>
        <name>ATP</name>
        <dbReference type="ChEBI" id="CHEBI:30616"/>
    </ligand>
</feature>